<gene>
    <name type="primary">sif3</name>
    <name type="ORF">SPAC12G12.15</name>
</gene>
<dbReference type="EMBL" id="CU329670">
    <property type="protein sequence ID" value="CAA91510.3"/>
    <property type="molecule type" value="Genomic_DNA"/>
</dbReference>
<dbReference type="PIR" id="S62545">
    <property type="entry name" value="S62545"/>
</dbReference>
<dbReference type="RefSeq" id="NP_592883.4">
    <property type="nucleotide sequence ID" value="NM_001018283.3"/>
</dbReference>
<dbReference type="SMR" id="Q09877"/>
<dbReference type="BioGRID" id="279524">
    <property type="interactions" value="40"/>
</dbReference>
<dbReference type="FunCoup" id="Q09877">
    <property type="interactions" value="48"/>
</dbReference>
<dbReference type="IntAct" id="Q09877">
    <property type="interactions" value="1"/>
</dbReference>
<dbReference type="STRING" id="284812.Q09877"/>
<dbReference type="iPTMnet" id="Q09877"/>
<dbReference type="PaxDb" id="4896-SPAC12G12.15.1"/>
<dbReference type="EnsemblFungi" id="SPAC12G12.15.1">
    <property type="protein sequence ID" value="SPAC12G12.15.1:pep"/>
    <property type="gene ID" value="SPAC12G12.15"/>
</dbReference>
<dbReference type="GeneID" id="2543091"/>
<dbReference type="KEGG" id="spo:2543091"/>
<dbReference type="PomBase" id="SPAC12G12.15">
    <property type="gene designation" value="sif3"/>
</dbReference>
<dbReference type="VEuPathDB" id="FungiDB:SPAC12G12.15"/>
<dbReference type="eggNOG" id="KOG2861">
    <property type="taxonomic scope" value="Eukaryota"/>
</dbReference>
<dbReference type="HOGENOM" id="CLU_011220_3_0_1"/>
<dbReference type="InParanoid" id="Q09877"/>
<dbReference type="OMA" id="NERCQVF"/>
<dbReference type="PRO" id="PR:Q09877"/>
<dbReference type="Proteomes" id="UP000002485">
    <property type="component" value="Chromosome I"/>
</dbReference>
<dbReference type="GO" id="GO:0005759">
    <property type="term" value="C:mitochondrial matrix"/>
    <property type="evidence" value="ECO:0000305"/>
    <property type="project" value="PomBase"/>
</dbReference>
<dbReference type="GO" id="GO:0031965">
    <property type="term" value="C:nuclear membrane"/>
    <property type="evidence" value="ECO:0007669"/>
    <property type="project" value="UniProtKB-SubCell"/>
</dbReference>
<dbReference type="GO" id="GO:0005634">
    <property type="term" value="C:nucleus"/>
    <property type="evidence" value="ECO:0007005"/>
    <property type="project" value="PomBase"/>
</dbReference>
<dbReference type="GO" id="GO:0140053">
    <property type="term" value="P:mitochondrial gene expression"/>
    <property type="evidence" value="ECO:0000266"/>
    <property type="project" value="PomBase"/>
</dbReference>
<dbReference type="InterPro" id="IPR003734">
    <property type="entry name" value="DUF155"/>
</dbReference>
<dbReference type="InterPro" id="IPR051624">
    <property type="entry name" value="RMD1/Sad1-interacting"/>
</dbReference>
<dbReference type="PANTHER" id="PTHR16255">
    <property type="entry name" value="REQUIRED FOR MEIOTIC NUCLEAR DIVISION PROTEIN 1 HOMOLOG"/>
    <property type="match status" value="1"/>
</dbReference>
<dbReference type="PANTHER" id="PTHR16255:SF4">
    <property type="entry name" value="SPORULATION PROTEIN RMD8"/>
    <property type="match status" value="1"/>
</dbReference>
<dbReference type="Pfam" id="PF02582">
    <property type="entry name" value="DUF155"/>
    <property type="match status" value="1"/>
</dbReference>
<comment type="subunit">
    <text evidence="3">Interacts with sad1.</text>
</comment>
<comment type="subcellular location">
    <subcellularLocation>
        <location evidence="5">Nucleus membrane</location>
        <topology evidence="5">Single-pass membrane protein</topology>
    </subcellularLocation>
</comment>
<comment type="similarity">
    <text evidence="5">Belongs to the RMD1/sif2 family.</text>
</comment>
<accession>Q09877</accession>
<accession>O94555</accession>
<keyword id="KW-0472">Membrane</keyword>
<keyword id="KW-0539">Nucleus</keyword>
<keyword id="KW-0597">Phosphoprotein</keyword>
<keyword id="KW-1185">Reference proteome</keyword>
<keyword id="KW-0812">Transmembrane</keyword>
<keyword id="KW-1133">Transmembrane helix</keyword>
<evidence type="ECO:0000255" key="1"/>
<evidence type="ECO:0000256" key="2">
    <source>
        <dbReference type="SAM" id="MobiDB-lite"/>
    </source>
</evidence>
<evidence type="ECO:0000269" key="3">
    <source>
    </source>
</evidence>
<evidence type="ECO:0000269" key="4">
    <source>
    </source>
</evidence>
<evidence type="ECO:0000305" key="5"/>
<organism>
    <name type="scientific">Schizosaccharomyces pombe (strain 972 / ATCC 24843)</name>
    <name type="common">Fission yeast</name>
    <dbReference type="NCBI Taxonomy" id="284812"/>
    <lineage>
        <taxon>Eukaryota</taxon>
        <taxon>Fungi</taxon>
        <taxon>Dikarya</taxon>
        <taxon>Ascomycota</taxon>
        <taxon>Taphrinomycotina</taxon>
        <taxon>Schizosaccharomycetes</taxon>
        <taxon>Schizosaccharomycetales</taxon>
        <taxon>Schizosaccharomycetaceae</taxon>
        <taxon>Schizosaccharomyces</taxon>
    </lineage>
</organism>
<proteinExistence type="evidence at protein level"/>
<name>SIF3_SCHPO</name>
<reference key="1">
    <citation type="journal article" date="2002" name="Nature">
        <title>The genome sequence of Schizosaccharomyces pombe.</title>
        <authorList>
            <person name="Wood V."/>
            <person name="Gwilliam R."/>
            <person name="Rajandream M.A."/>
            <person name="Lyne M.H."/>
            <person name="Lyne R."/>
            <person name="Stewart A."/>
            <person name="Sgouros J.G."/>
            <person name="Peat N."/>
            <person name="Hayles J."/>
            <person name="Baker S.G."/>
            <person name="Basham D."/>
            <person name="Bowman S."/>
            <person name="Brooks K."/>
            <person name="Brown D."/>
            <person name="Brown S."/>
            <person name="Chillingworth T."/>
            <person name="Churcher C.M."/>
            <person name="Collins M."/>
            <person name="Connor R."/>
            <person name="Cronin A."/>
            <person name="Davis P."/>
            <person name="Feltwell T."/>
            <person name="Fraser A."/>
            <person name="Gentles S."/>
            <person name="Goble A."/>
            <person name="Hamlin N."/>
            <person name="Harris D.E."/>
            <person name="Hidalgo J."/>
            <person name="Hodgson G."/>
            <person name="Holroyd S."/>
            <person name="Hornsby T."/>
            <person name="Howarth S."/>
            <person name="Huckle E.J."/>
            <person name="Hunt S."/>
            <person name="Jagels K."/>
            <person name="James K.D."/>
            <person name="Jones L."/>
            <person name="Jones M."/>
            <person name="Leather S."/>
            <person name="McDonald S."/>
            <person name="McLean J."/>
            <person name="Mooney P."/>
            <person name="Moule S."/>
            <person name="Mungall K.L."/>
            <person name="Murphy L.D."/>
            <person name="Niblett D."/>
            <person name="Odell C."/>
            <person name="Oliver K."/>
            <person name="O'Neil S."/>
            <person name="Pearson D."/>
            <person name="Quail M.A."/>
            <person name="Rabbinowitsch E."/>
            <person name="Rutherford K.M."/>
            <person name="Rutter S."/>
            <person name="Saunders D."/>
            <person name="Seeger K."/>
            <person name="Sharp S."/>
            <person name="Skelton J."/>
            <person name="Simmonds M.N."/>
            <person name="Squares R."/>
            <person name="Squares S."/>
            <person name="Stevens K."/>
            <person name="Taylor K."/>
            <person name="Taylor R.G."/>
            <person name="Tivey A."/>
            <person name="Walsh S.V."/>
            <person name="Warren T."/>
            <person name="Whitehead S."/>
            <person name="Woodward J.R."/>
            <person name="Volckaert G."/>
            <person name="Aert R."/>
            <person name="Robben J."/>
            <person name="Grymonprez B."/>
            <person name="Weltjens I."/>
            <person name="Vanstreels E."/>
            <person name="Rieger M."/>
            <person name="Schaefer M."/>
            <person name="Mueller-Auer S."/>
            <person name="Gabel C."/>
            <person name="Fuchs M."/>
            <person name="Duesterhoeft A."/>
            <person name="Fritzc C."/>
            <person name="Holzer E."/>
            <person name="Moestl D."/>
            <person name="Hilbert H."/>
            <person name="Borzym K."/>
            <person name="Langer I."/>
            <person name="Beck A."/>
            <person name="Lehrach H."/>
            <person name="Reinhardt R."/>
            <person name="Pohl T.M."/>
            <person name="Eger P."/>
            <person name="Zimmermann W."/>
            <person name="Wedler H."/>
            <person name="Wambutt R."/>
            <person name="Purnelle B."/>
            <person name="Goffeau A."/>
            <person name="Cadieu E."/>
            <person name="Dreano S."/>
            <person name="Gloux S."/>
            <person name="Lelaure V."/>
            <person name="Mottier S."/>
            <person name="Galibert F."/>
            <person name="Aves S.J."/>
            <person name="Xiang Z."/>
            <person name="Hunt C."/>
            <person name="Moore K."/>
            <person name="Hurst S.M."/>
            <person name="Lucas M."/>
            <person name="Rochet M."/>
            <person name="Gaillardin C."/>
            <person name="Tallada V.A."/>
            <person name="Garzon A."/>
            <person name="Thode G."/>
            <person name="Daga R.R."/>
            <person name="Cruzado L."/>
            <person name="Jimenez J."/>
            <person name="Sanchez M."/>
            <person name="del Rey F."/>
            <person name="Benito J."/>
            <person name="Dominguez A."/>
            <person name="Revuelta J.L."/>
            <person name="Moreno S."/>
            <person name="Armstrong J."/>
            <person name="Forsburg S.L."/>
            <person name="Cerutti L."/>
            <person name="Lowe T."/>
            <person name="McCombie W.R."/>
            <person name="Paulsen I."/>
            <person name="Potashkin J."/>
            <person name="Shpakovski G.V."/>
            <person name="Ussery D."/>
            <person name="Barrell B.G."/>
            <person name="Nurse P."/>
        </authorList>
    </citation>
    <scope>NUCLEOTIDE SEQUENCE [LARGE SCALE GENOMIC DNA]</scope>
    <source>
        <strain>972 / ATCC 24843</strain>
    </source>
</reference>
<reference key="2">
    <citation type="journal article" date="2011" name="Science">
        <title>Comparative functional genomics of the fission yeasts.</title>
        <authorList>
            <person name="Rhind N."/>
            <person name="Chen Z."/>
            <person name="Yassour M."/>
            <person name="Thompson D.A."/>
            <person name="Haas B.J."/>
            <person name="Habib N."/>
            <person name="Wapinski I."/>
            <person name="Roy S."/>
            <person name="Lin M.F."/>
            <person name="Heiman D.I."/>
            <person name="Young S.K."/>
            <person name="Furuya K."/>
            <person name="Guo Y."/>
            <person name="Pidoux A."/>
            <person name="Chen H.M."/>
            <person name="Robbertse B."/>
            <person name="Goldberg J.M."/>
            <person name="Aoki K."/>
            <person name="Bayne E.H."/>
            <person name="Berlin A.M."/>
            <person name="Desjardins C.A."/>
            <person name="Dobbs E."/>
            <person name="Dukaj L."/>
            <person name="Fan L."/>
            <person name="FitzGerald M.G."/>
            <person name="French C."/>
            <person name="Gujja S."/>
            <person name="Hansen K."/>
            <person name="Keifenheim D."/>
            <person name="Levin J.Z."/>
            <person name="Mosher R.A."/>
            <person name="Mueller C.A."/>
            <person name="Pfiffner J."/>
            <person name="Priest M."/>
            <person name="Russ C."/>
            <person name="Smialowska A."/>
            <person name="Swoboda P."/>
            <person name="Sykes S.M."/>
            <person name="Vaughn M."/>
            <person name="Vengrova S."/>
            <person name="Yoder R."/>
            <person name="Zeng Q."/>
            <person name="Allshire R."/>
            <person name="Baulcombe D."/>
            <person name="Birren B.W."/>
            <person name="Brown W."/>
            <person name="Ekwall K."/>
            <person name="Kellis M."/>
            <person name="Leatherwood J."/>
            <person name="Levin H."/>
            <person name="Margalit H."/>
            <person name="Martienssen R."/>
            <person name="Nieduszynski C.A."/>
            <person name="Spatafora J.W."/>
            <person name="Friedman N."/>
            <person name="Dalgaard J.Z."/>
            <person name="Baumann P."/>
            <person name="Niki H."/>
            <person name="Regev A."/>
            <person name="Nusbaum C."/>
        </authorList>
    </citation>
    <scope>REVISION OF GENE MODEL</scope>
</reference>
<reference key="3">
    <citation type="journal article" date="2004" name="Mol. Genet. Genomics">
        <title>Two-hybrid search for proteins that interact with Sad1 and Kms1, two membrane-bound components of the spindle pole body in fission yeast.</title>
        <authorList>
            <person name="Miki F."/>
            <person name="Kurabayashi A."/>
            <person name="Tange Y."/>
            <person name="Okazaki K."/>
            <person name="Shimanuki M."/>
            <person name="Niwa O."/>
        </authorList>
    </citation>
    <scope>INTERACTION WITH SAD1</scope>
    <scope>SUBCELLULAR LOCATION</scope>
</reference>
<reference key="4">
    <citation type="journal article" date="2006" name="Nat. Biotechnol.">
        <title>ORFeome cloning and global analysis of protein localization in the fission yeast Schizosaccharomyces pombe.</title>
        <authorList>
            <person name="Matsuyama A."/>
            <person name="Arai R."/>
            <person name="Yashiroda Y."/>
            <person name="Shirai A."/>
            <person name="Kamata A."/>
            <person name="Sekido S."/>
            <person name="Kobayashi Y."/>
            <person name="Hashimoto A."/>
            <person name="Hamamoto M."/>
            <person name="Hiraoka Y."/>
            <person name="Horinouchi S."/>
            <person name="Yoshida M."/>
        </authorList>
    </citation>
    <scope>SUBCELLULAR LOCATION [LARGE SCALE ANALYSIS]</scope>
</reference>
<reference key="5">
    <citation type="journal article" date="2008" name="J. Proteome Res.">
        <title>Phosphoproteome analysis of fission yeast.</title>
        <authorList>
            <person name="Wilson-Grady J.T."/>
            <person name="Villen J."/>
            <person name="Gygi S.P."/>
        </authorList>
    </citation>
    <scope>PHOSPHORYLATION [LARGE SCALE ANALYSIS] AT SER-42</scope>
    <scope>IDENTIFICATION BY MASS SPECTROMETRY</scope>
</reference>
<sequence length="472" mass="54452">MSTKDKLNLPPKRTINTRLSTPVHIPPPINSESTRITPQHGSPPRFGDHRISAAQGLFQRRRNARKIDHPLGWFLKNRHAAAHIPQRTTKTSQKLVLLPENHAVNSFNEEESNYEDLLTPSDAYNLIKLENLPRDKREELGFPRATAYCVCEAFQLPKVKHFLKHYHKVRAKKYDEVLYAVYHLPLVYGRSESCRVSSGPAPDDMPSSASNHNQKHLDSDKPDNENFDSHIISQLYRISEIFVFSYGVVVFWNFSLSQEKDILADLTFGGDNSLMVKPLAEEECEIEDLHFHYAPNTKRPRIYNDMIHIPSADNKMKLAMSHALAQSVKLSRFELRTDVTMNSALFYPKKLALYGHLGLSRVEVVRMSGHLFQLRVDVNLISNILDTPDFLWDSEPLLLPLYTAFREYLEIGPRTNVLNRRCKVIFDMLDIFGKSSADRKMNSITWIIIILISLFVIIFTLEVILRLRWAHR</sequence>
<feature type="chain" id="PRO_0000097759" description="Sad1-interacting factor 3">
    <location>
        <begin position="1"/>
        <end position="472"/>
    </location>
</feature>
<feature type="topological domain" description="Lumenal" evidence="1">
    <location>
        <begin position="1"/>
        <end position="443"/>
    </location>
</feature>
<feature type="transmembrane region" description="Helical" evidence="1">
    <location>
        <begin position="444"/>
        <end position="464"/>
    </location>
</feature>
<feature type="topological domain" description="Cytoplasmic" evidence="1">
    <location>
        <begin position="465"/>
        <end position="472"/>
    </location>
</feature>
<feature type="region of interest" description="Disordered" evidence="2">
    <location>
        <begin position="1"/>
        <end position="47"/>
    </location>
</feature>
<feature type="region of interest" description="Disordered" evidence="2">
    <location>
        <begin position="197"/>
        <end position="223"/>
    </location>
</feature>
<feature type="compositionally biased region" description="Polar residues" evidence="2">
    <location>
        <begin position="30"/>
        <end position="40"/>
    </location>
</feature>
<feature type="modified residue" description="Phosphoserine" evidence="4">
    <location>
        <position position="42"/>
    </location>
</feature>
<protein>
    <recommendedName>
        <fullName>Sad1-interacting factor 3</fullName>
    </recommendedName>
</protein>